<name>GMSS_CLOTT</name>
<accession>Q05488</accession>
<organism>
    <name type="scientific">Clostridium tetanomorphum</name>
    <dbReference type="NCBI Taxonomy" id="1553"/>
    <lineage>
        <taxon>Bacteria</taxon>
        <taxon>Bacillati</taxon>
        <taxon>Bacillota</taxon>
        <taxon>Clostridia</taxon>
        <taxon>Eubacteriales</taxon>
        <taxon>Clostridiaceae</taxon>
        <taxon>Clostridium</taxon>
    </lineage>
</organism>
<gene>
    <name evidence="1" type="primary">glmS</name>
    <name type="synonym">mutS</name>
</gene>
<dbReference type="EC" id="5.4.99.1" evidence="1"/>
<dbReference type="EMBL" id="X70499">
    <property type="protein sequence ID" value="CAA49908.1"/>
    <property type="molecule type" value="Genomic_DNA"/>
</dbReference>
<dbReference type="EMBL" id="X68570">
    <property type="protein sequence ID" value="CAA48567.1"/>
    <property type="molecule type" value="Genomic_DNA"/>
</dbReference>
<dbReference type="PIR" id="S29502">
    <property type="entry name" value="S29502"/>
</dbReference>
<dbReference type="RefSeq" id="WP_035147515.1">
    <property type="nucleotide sequence ID" value="NZ_JAAZWO010000006.1"/>
</dbReference>
<dbReference type="PDB" id="1BE1">
    <property type="method" value="NMR"/>
    <property type="chains" value="A=1-137"/>
</dbReference>
<dbReference type="PDB" id="1FMF">
    <property type="method" value="NMR"/>
    <property type="chains" value="A=1-137"/>
</dbReference>
<dbReference type="PDB" id="1ID8">
    <property type="method" value="NMR"/>
    <property type="chains" value="A=1-137"/>
</dbReference>
<dbReference type="PDBsum" id="1BE1"/>
<dbReference type="PDBsum" id="1FMF"/>
<dbReference type="PDBsum" id="1ID8"/>
<dbReference type="BMRB" id="Q05488"/>
<dbReference type="SMR" id="Q05488"/>
<dbReference type="DrugBank" id="DB02576">
    <property type="generic name" value="F-Loop of Vitamin B12"/>
</dbReference>
<dbReference type="BRENDA" id="5.4.99.1">
    <property type="organism ID" value="1527"/>
</dbReference>
<dbReference type="SABIO-RK" id="Q05488"/>
<dbReference type="UniPathway" id="UPA00561">
    <property type="reaction ID" value="UER00617"/>
</dbReference>
<dbReference type="EvolutionaryTrace" id="Q05488"/>
<dbReference type="GO" id="GO:0031419">
    <property type="term" value="F:cobalamin binding"/>
    <property type="evidence" value="ECO:0007669"/>
    <property type="project" value="UniProtKB-KW"/>
</dbReference>
<dbReference type="GO" id="GO:0046872">
    <property type="term" value="F:metal ion binding"/>
    <property type="evidence" value="ECO:0007669"/>
    <property type="project" value="UniProtKB-KW"/>
</dbReference>
<dbReference type="GO" id="GO:0050097">
    <property type="term" value="F:methylaspartate mutase activity"/>
    <property type="evidence" value="ECO:0007669"/>
    <property type="project" value="UniProtKB-UniRule"/>
</dbReference>
<dbReference type="GO" id="GO:0019670">
    <property type="term" value="P:anaerobic glutamate catabolic process"/>
    <property type="evidence" value="ECO:0007669"/>
    <property type="project" value="InterPro"/>
</dbReference>
<dbReference type="GO" id="GO:0019553">
    <property type="term" value="P:glutamate catabolic process via L-citramalate"/>
    <property type="evidence" value="ECO:0007669"/>
    <property type="project" value="UniProtKB-UniRule"/>
</dbReference>
<dbReference type="CDD" id="cd02072">
    <property type="entry name" value="Glm_B12_BD"/>
    <property type="match status" value="1"/>
</dbReference>
<dbReference type="Gene3D" id="3.40.50.280">
    <property type="entry name" value="Cobalamin-binding domain"/>
    <property type="match status" value="1"/>
</dbReference>
<dbReference type="HAMAP" id="MF_00526">
    <property type="entry name" value="Me_Asp_mutase_S"/>
    <property type="match status" value="1"/>
</dbReference>
<dbReference type="InterPro" id="IPR006158">
    <property type="entry name" value="Cobalamin-bd"/>
</dbReference>
<dbReference type="InterPro" id="IPR036724">
    <property type="entry name" value="Cobalamin-bd_sf"/>
</dbReference>
<dbReference type="InterPro" id="IPR006394">
    <property type="entry name" value="GlmS"/>
</dbReference>
<dbReference type="NCBIfam" id="TIGR01501">
    <property type="entry name" value="MthylAspMutase"/>
    <property type="match status" value="1"/>
</dbReference>
<dbReference type="NCBIfam" id="NF002612">
    <property type="entry name" value="PRK02261.1"/>
    <property type="match status" value="1"/>
</dbReference>
<dbReference type="Pfam" id="PF02310">
    <property type="entry name" value="B12-binding"/>
    <property type="match status" value="1"/>
</dbReference>
<dbReference type="SUPFAM" id="SSF52242">
    <property type="entry name" value="Cobalamin (vitamin B12)-binding domain"/>
    <property type="match status" value="1"/>
</dbReference>
<dbReference type="PROSITE" id="PS51332">
    <property type="entry name" value="B12_BINDING"/>
    <property type="match status" value="1"/>
</dbReference>
<evidence type="ECO:0000255" key="1">
    <source>
        <dbReference type="HAMAP-Rule" id="MF_00526"/>
    </source>
</evidence>
<evidence type="ECO:0000269" key="2">
    <source>
    </source>
</evidence>
<evidence type="ECO:0007829" key="3">
    <source>
        <dbReference type="PDB" id="1BE1"/>
    </source>
</evidence>
<evidence type="ECO:0007829" key="4">
    <source>
        <dbReference type="PDB" id="1FMF"/>
    </source>
</evidence>
<evidence type="ECO:0007829" key="5">
    <source>
        <dbReference type="PDB" id="1ID8"/>
    </source>
</evidence>
<keyword id="KW-0002">3D-structure</keyword>
<keyword id="KW-0846">Cobalamin</keyword>
<keyword id="KW-0170">Cobalt</keyword>
<keyword id="KW-0903">Direct protein sequencing</keyword>
<keyword id="KW-0413">Isomerase</keyword>
<keyword id="KW-0479">Metal-binding</keyword>
<protein>
    <recommendedName>
        <fullName evidence="1">Glutamate mutase sigma subunit</fullName>
        <ecNumber evidence="1">5.4.99.1</ecNumber>
    </recommendedName>
    <alternativeName>
        <fullName evidence="1">Glutamate mutase S chain</fullName>
    </alternativeName>
    <alternativeName>
        <fullName evidence="1">Glutamate mutase small subunit</fullName>
    </alternativeName>
    <alternativeName>
        <fullName evidence="1">Methylaspartate mutase</fullName>
    </alternativeName>
</protein>
<reference key="1">
    <citation type="journal article" date="1992" name="FEBS Lett.">
        <title>Cloning and sequencing of glutamate mutase component S from Clostridium tetanomorphum. Homologies with other cobalamin-dependent enzymes.</title>
        <authorList>
            <person name="Marsh E.N.G."/>
            <person name="Holloway D.E."/>
        </authorList>
    </citation>
    <scope>NUCLEOTIDE SEQUENCE [GENOMIC DNA]</scope>
    <scope>PROTEIN SEQUENCE OF 1-33</scope>
    <source>
        <strain>ATCC 15920 / DSM 528 / NCIMB 11547 / H1</strain>
    </source>
</reference>
<reference key="2">
    <citation type="journal article" date="1993" name="FEBS Lett.">
        <title>Cloning and sequencing of glutamate mutase component E from Clostridium tetanomorphum.</title>
        <authorList>
            <person name="Brecht M."/>
            <person name="Kellermann J."/>
            <person name="Plueckthun A."/>
        </authorList>
    </citation>
    <scope>PROTEIN SEQUENCE OF 1-24</scope>
    <source>
        <strain>ATCC 15920 / DSM 528 / NCIMB 11547 / H1</strain>
    </source>
</reference>
<reference key="3">
    <citation type="journal article" date="1994" name="J. Biol. Chem.">
        <title>Adenosylcobalamin-dependent glutamate mutase from Clostridium tetanomorphum. Overexpression in Escherichia coli, purification, and characterization of the recombinant enzyme.</title>
        <authorList>
            <person name="Holloway D.E."/>
            <person name="Marsh E.N."/>
        </authorList>
    </citation>
    <scope>FUNCTION</scope>
    <scope>CATALYTIC ACTIVITY</scope>
    <scope>BIOPHYSICOCHEMICAL PROPERTIES</scope>
    <scope>COFACTOR</scope>
    <scope>SUBUNIT</scope>
</reference>
<reference key="4">
    <citation type="journal article" date="1998" name="Structure">
        <title>How a protein prepares for B12 binding: structure and dynamics of the B12-binding subunit of glutamate mutase from Clostridium tetanomorphum.</title>
        <authorList>
            <person name="Tollinger M."/>
            <person name="Konrat R."/>
            <person name="Hilbert B.H."/>
            <person name="Marsh E.N.G."/>
            <person name="Kraeutler B."/>
        </authorList>
    </citation>
    <scope>STRUCTURE BY NMR</scope>
    <source>
        <strain>ATCC 15920 / DSM 528 / NCIMB 11547 / H1</strain>
    </source>
</reference>
<reference key="5">
    <citation type="journal article" date="2001" name="ChemBioChem">
        <title>A protein pre-organized to trap the nucleotide moiety of coenzyme B(12): refined solution structure of the B(12)-binding subunit of glutamate mutase from Clostridium tetanomorphum.</title>
        <authorList>
            <person name="Hoffmann B."/>
            <person name="Tollinger M."/>
            <person name="Konrat R."/>
            <person name="Huhta M."/>
            <person name="Marsh E.N."/>
            <person name="Krautler B."/>
        </authorList>
    </citation>
    <scope>STRUCTURE BY NMR</scope>
</reference>
<reference key="6">
    <citation type="journal article" date="2001" name="J. Mol. Biol.">
        <title>The B(12)-binding subunit of glutamate mutase from Clostridium tetanomorphum traps the nucleotide moiety of coenzyme B(12).</title>
        <authorList>
            <person name="Tollinger M."/>
            <person name="Eichmuller C."/>
            <person name="Konrat R."/>
            <person name="Huhta M.S."/>
            <person name="Marsh E.N."/>
            <person name="Krautler B."/>
        </authorList>
    </citation>
    <scope>STRUCTURE BY NMR</scope>
</reference>
<comment type="function">
    <text evidence="1 2">Catalyzes the carbon skeleton rearrangement of L-glutamate to L-threo-3-methylaspartate ((2S,3S)-3-methylaspartate).</text>
</comment>
<comment type="catalytic activity">
    <reaction evidence="1 2">
        <text>(2S,3S)-3-methyl-L-aspartate = L-glutamate</text>
        <dbReference type="Rhea" id="RHEA:12857"/>
        <dbReference type="ChEBI" id="CHEBI:29985"/>
        <dbReference type="ChEBI" id="CHEBI:58724"/>
        <dbReference type="EC" id="5.4.99.1"/>
    </reaction>
</comment>
<comment type="cofactor">
    <cofactor evidence="1 2">
        <name>adenosylcob(III)alamin</name>
        <dbReference type="ChEBI" id="CHEBI:18408"/>
    </cofactor>
</comment>
<comment type="biophysicochemical properties">
    <kinetics>
        <KM evidence="2">18 uM for adenosylcobalamin</KM>
        <KM evidence="2">1.09 mM for L-glutamate</KM>
        <Vmax evidence="2">22.8 umol/min/mg enzyme</Vmax>
        <text>kcat is 20.6 sec(-1) for mutase activity with L-glutamate.</text>
    </kinetics>
</comment>
<comment type="pathway">
    <text evidence="1">Amino-acid degradation; L-glutamate degradation via mesaconate pathway; acetate and pyruvate from L-glutamate: step 1/4.</text>
</comment>
<comment type="subunit">
    <text evidence="1 2">Heterotetramer composed of 2 epsilon subunits (GlmE) and 2 sigma subunits (GlmS). GlmE exists as a homodimer and GlmS as a monomer.</text>
</comment>
<comment type="similarity">
    <text evidence="1">Belongs to the methylaspartate mutase GlmS subunit family.</text>
</comment>
<feature type="chain" id="PRO_0000216445" description="Glutamate mutase sigma subunit">
    <location>
        <begin position="1"/>
        <end position="137"/>
    </location>
</feature>
<feature type="domain" description="B12-binding" evidence="1">
    <location>
        <begin position="3"/>
        <end position="137"/>
    </location>
</feature>
<feature type="binding site" evidence="1">
    <location>
        <begin position="13"/>
        <end position="17"/>
    </location>
    <ligand>
        <name>adenosylcob(III)alamin</name>
        <dbReference type="ChEBI" id="CHEBI:18408"/>
    </ligand>
</feature>
<feature type="binding site" description="axial binding residue">
    <location>
        <position position="16"/>
    </location>
    <ligand>
        <name>adenosylcob(III)alamin</name>
        <dbReference type="ChEBI" id="CHEBI:18408"/>
    </ligand>
    <ligandPart>
        <name>Co</name>
        <dbReference type="ChEBI" id="CHEBI:27638"/>
    </ligandPart>
</feature>
<feature type="binding site" evidence="1">
    <location>
        <begin position="61"/>
        <end position="63"/>
    </location>
    <ligand>
        <name>adenosylcob(III)alamin</name>
        <dbReference type="ChEBI" id="CHEBI:18408"/>
    </ligand>
</feature>
<feature type="binding site" evidence="1">
    <location>
        <begin position="93"/>
        <end position="97"/>
    </location>
    <ligand>
        <name>adenosylcob(III)alamin</name>
        <dbReference type="ChEBI" id="CHEBI:18408"/>
    </ligand>
</feature>
<feature type="strand" evidence="3">
    <location>
        <begin position="5"/>
        <end position="11"/>
    </location>
</feature>
<feature type="strand" evidence="5">
    <location>
        <begin position="13"/>
        <end position="16"/>
    </location>
</feature>
<feature type="strand" evidence="4">
    <location>
        <begin position="20"/>
        <end position="22"/>
    </location>
</feature>
<feature type="strand" evidence="3">
    <location>
        <begin position="25"/>
        <end position="28"/>
    </location>
</feature>
<feature type="turn" evidence="3">
    <location>
        <begin position="29"/>
        <end position="31"/>
    </location>
</feature>
<feature type="strand" evidence="3">
    <location>
        <begin position="33"/>
        <end position="40"/>
    </location>
</feature>
<feature type="helix" evidence="3">
    <location>
        <begin position="45"/>
        <end position="52"/>
    </location>
</feature>
<feature type="strand" evidence="3">
    <location>
        <begin position="56"/>
        <end position="66"/>
    </location>
</feature>
<feature type="helix" evidence="3">
    <location>
        <begin position="67"/>
        <end position="71"/>
    </location>
</feature>
<feature type="helix" evidence="3">
    <location>
        <begin position="75"/>
        <end position="78"/>
    </location>
</feature>
<feature type="strand" evidence="3">
    <location>
        <begin position="87"/>
        <end position="92"/>
    </location>
</feature>
<feature type="strand" evidence="3">
    <location>
        <begin position="94"/>
        <end position="96"/>
    </location>
</feature>
<feature type="helix" evidence="3">
    <location>
        <begin position="104"/>
        <end position="111"/>
    </location>
</feature>
<feature type="strand" evidence="3">
    <location>
        <begin position="114"/>
        <end position="116"/>
    </location>
</feature>
<feature type="turn" evidence="3">
    <location>
        <begin position="123"/>
        <end position="128"/>
    </location>
</feature>
<feature type="helix" evidence="3">
    <location>
        <begin position="129"/>
        <end position="132"/>
    </location>
</feature>
<sequence>MEKKTIVLGVIGSDCHAVGNKILDHSFTNAGFNVVNIGVLSSQEDFINAAIETKADLICVSSLYGQGEIDCKGLREKCDEAGLKGIKLFVGGNIVVGKQNWPDVEQRFKAMGFDRVYPPGTSPETTIADMKEVLGVE</sequence>
<proteinExistence type="evidence at protein level"/>